<protein>
    <recommendedName>
        <fullName>Stromelysin-3</fullName>
        <shortName>SL-3</shortName>
        <shortName>ST3</shortName>
        <ecNumber>3.4.24.-</ecNumber>
    </recommendedName>
    <alternativeName>
        <fullName>Matrix metalloproteinase-11</fullName>
        <shortName>MMP-11</shortName>
    </alternativeName>
</protein>
<reference key="1">
    <citation type="journal article" date="1997" name="Gene">
        <title>Rat stromelysin 3: cDNA cloning from healing skin wound, activation by furin and expression in rat tissues.</title>
        <authorList>
            <person name="Okada A."/>
            <person name="Saez S."/>
            <person name="Misumi Y."/>
            <person name="Basset P."/>
        </authorList>
    </citation>
    <scope>NUCLEOTIDE SEQUENCE [MRNA]</scope>
    <scope>TISSUE SPECIFICITY</scope>
    <scope>INDUCTION</scope>
    <scope>PROTEOLYTIC PROCESSING</scope>
    <source>
        <strain>Wistar</strain>
    </source>
</reference>
<reference key="2">
    <citation type="journal article" date="2004" name="Genome Res.">
        <title>The status, quality, and expansion of the NIH full-length cDNA project: the Mammalian Gene Collection (MGC).</title>
        <authorList>
            <consortium name="The MGC Project Team"/>
        </authorList>
    </citation>
    <scope>NUCLEOTIDE SEQUENCE [LARGE SCALE MRNA]</scope>
    <source>
        <tissue>Prostate</tissue>
    </source>
</reference>
<name>MMP11_RAT</name>
<dbReference type="EC" id="3.4.24.-"/>
<dbReference type="EMBL" id="U46034">
    <property type="protein sequence ID" value="AAC53061.1"/>
    <property type="status" value="ALT_INIT"/>
    <property type="molecule type" value="mRNA"/>
</dbReference>
<dbReference type="EMBL" id="BC099781">
    <property type="protein sequence ID" value="AAH99781.2"/>
    <property type="status" value="ALT_INIT"/>
    <property type="molecule type" value="mRNA"/>
</dbReference>
<dbReference type="RefSeq" id="NP_037112.2">
    <property type="nucleotide sequence ID" value="NM_012980.2"/>
</dbReference>
<dbReference type="RefSeq" id="XP_008772050.1">
    <property type="nucleotide sequence ID" value="XM_008773828.2"/>
</dbReference>
<dbReference type="SMR" id="Q499S5"/>
<dbReference type="BioGRID" id="247514">
    <property type="interactions" value="2"/>
</dbReference>
<dbReference type="FunCoup" id="Q499S5">
    <property type="interactions" value="177"/>
</dbReference>
<dbReference type="STRING" id="10116.ENSRNOP00000035334"/>
<dbReference type="MEROPS" id="M10.007"/>
<dbReference type="GlyGen" id="Q499S5">
    <property type="glycosylation" value="1 site"/>
</dbReference>
<dbReference type="PhosphoSitePlus" id="Q499S5"/>
<dbReference type="PaxDb" id="10116-ENSRNOP00000035334"/>
<dbReference type="Ensembl" id="ENSRNOT00000031400.6">
    <property type="protein sequence ID" value="ENSRNOP00000035334.4"/>
    <property type="gene ID" value="ENSRNOG00000028344.6"/>
</dbReference>
<dbReference type="GeneID" id="25481"/>
<dbReference type="KEGG" id="rno:25481"/>
<dbReference type="UCSC" id="RGD:3099">
    <property type="organism name" value="rat"/>
</dbReference>
<dbReference type="AGR" id="RGD:3099"/>
<dbReference type="CTD" id="4320"/>
<dbReference type="RGD" id="3099">
    <property type="gene designation" value="Mmp11"/>
</dbReference>
<dbReference type="eggNOG" id="KOG1565">
    <property type="taxonomic scope" value="Eukaryota"/>
</dbReference>
<dbReference type="GeneTree" id="ENSGT00940000156340"/>
<dbReference type="HOGENOM" id="CLU_015489_8_3_1"/>
<dbReference type="InParanoid" id="Q499S5"/>
<dbReference type="OMA" id="YWRFNPH"/>
<dbReference type="OrthoDB" id="65569at2759"/>
<dbReference type="PhylomeDB" id="Q499S5"/>
<dbReference type="Reactome" id="R-RNO-1474228">
    <property type="pathway name" value="Degradation of the extracellular matrix"/>
</dbReference>
<dbReference type="Reactome" id="R-RNO-1592389">
    <property type="pathway name" value="Activation of Matrix Metalloproteinases"/>
</dbReference>
<dbReference type="PRO" id="PR:Q499S5"/>
<dbReference type="Proteomes" id="UP000002494">
    <property type="component" value="Chromosome 20"/>
</dbReference>
<dbReference type="Bgee" id="ENSRNOG00000028344">
    <property type="expression patterns" value="Expressed in skeletal muscle tissue"/>
</dbReference>
<dbReference type="GO" id="GO:0031012">
    <property type="term" value="C:extracellular matrix"/>
    <property type="evidence" value="ECO:0000266"/>
    <property type="project" value="RGD"/>
</dbReference>
<dbReference type="GO" id="GO:0005615">
    <property type="term" value="C:extracellular space"/>
    <property type="evidence" value="ECO:0000318"/>
    <property type="project" value="GO_Central"/>
</dbReference>
<dbReference type="GO" id="GO:0004222">
    <property type="term" value="F:metalloendopeptidase activity"/>
    <property type="evidence" value="ECO:0000318"/>
    <property type="project" value="GO_Central"/>
</dbReference>
<dbReference type="GO" id="GO:0008237">
    <property type="term" value="F:metallopeptidase activity"/>
    <property type="evidence" value="ECO:0000266"/>
    <property type="project" value="RGD"/>
</dbReference>
<dbReference type="GO" id="GO:0008270">
    <property type="term" value="F:zinc ion binding"/>
    <property type="evidence" value="ECO:0007669"/>
    <property type="project" value="InterPro"/>
</dbReference>
<dbReference type="GO" id="GO:0071711">
    <property type="term" value="P:basement membrane organization"/>
    <property type="evidence" value="ECO:0000266"/>
    <property type="project" value="RGD"/>
</dbReference>
<dbReference type="GO" id="GO:0030574">
    <property type="term" value="P:collagen catabolic process"/>
    <property type="evidence" value="ECO:0000266"/>
    <property type="project" value="RGD"/>
</dbReference>
<dbReference type="GO" id="GO:0030199">
    <property type="term" value="P:collagen fibril organization"/>
    <property type="evidence" value="ECO:0000266"/>
    <property type="project" value="RGD"/>
</dbReference>
<dbReference type="GO" id="GO:0030198">
    <property type="term" value="P:extracellular matrix organization"/>
    <property type="evidence" value="ECO:0000266"/>
    <property type="project" value="RGD"/>
</dbReference>
<dbReference type="GO" id="GO:0045599">
    <property type="term" value="P:negative regulation of fat cell differentiation"/>
    <property type="evidence" value="ECO:0000266"/>
    <property type="project" value="RGD"/>
</dbReference>
<dbReference type="GO" id="GO:0006508">
    <property type="term" value="P:proteolysis"/>
    <property type="evidence" value="ECO:0007669"/>
    <property type="project" value="UniProtKB-KW"/>
</dbReference>
<dbReference type="CDD" id="cd00094">
    <property type="entry name" value="HX"/>
    <property type="match status" value="1"/>
</dbReference>
<dbReference type="CDD" id="cd04278">
    <property type="entry name" value="ZnMc_MMP"/>
    <property type="match status" value="1"/>
</dbReference>
<dbReference type="FunFam" id="2.110.10.10:FF:000005">
    <property type="entry name" value="Stromelysin-3 preproprotein"/>
    <property type="match status" value="1"/>
</dbReference>
<dbReference type="FunFam" id="3.40.390.10:FF:000020">
    <property type="entry name" value="Stromelysin-3 preproprotein"/>
    <property type="match status" value="1"/>
</dbReference>
<dbReference type="Gene3D" id="3.40.390.10">
    <property type="entry name" value="Collagenase (Catalytic Domain)"/>
    <property type="match status" value="1"/>
</dbReference>
<dbReference type="Gene3D" id="2.110.10.10">
    <property type="entry name" value="Hemopexin-like domain"/>
    <property type="match status" value="1"/>
</dbReference>
<dbReference type="InterPro" id="IPR000585">
    <property type="entry name" value="Hemopexin-like_dom"/>
</dbReference>
<dbReference type="InterPro" id="IPR036375">
    <property type="entry name" value="Hemopexin-like_dom_sf"/>
</dbReference>
<dbReference type="InterPro" id="IPR018487">
    <property type="entry name" value="Hemopexin-like_repeat"/>
</dbReference>
<dbReference type="InterPro" id="IPR018486">
    <property type="entry name" value="Hemopexin_CS"/>
</dbReference>
<dbReference type="InterPro" id="IPR033739">
    <property type="entry name" value="M10A_MMP"/>
</dbReference>
<dbReference type="InterPro" id="IPR024079">
    <property type="entry name" value="MetalloPept_cat_dom_sf"/>
</dbReference>
<dbReference type="InterPro" id="IPR001818">
    <property type="entry name" value="Pept_M10_metallopeptidase"/>
</dbReference>
<dbReference type="InterPro" id="IPR021190">
    <property type="entry name" value="Pept_M10A"/>
</dbReference>
<dbReference type="InterPro" id="IPR006026">
    <property type="entry name" value="Peptidase_Metallo"/>
</dbReference>
<dbReference type="PANTHER" id="PTHR10201">
    <property type="entry name" value="MATRIX METALLOPROTEINASE"/>
    <property type="match status" value="1"/>
</dbReference>
<dbReference type="PANTHER" id="PTHR10201:SF20">
    <property type="entry name" value="STROMELYSIN-3"/>
    <property type="match status" value="1"/>
</dbReference>
<dbReference type="Pfam" id="PF00045">
    <property type="entry name" value="Hemopexin"/>
    <property type="match status" value="4"/>
</dbReference>
<dbReference type="Pfam" id="PF00413">
    <property type="entry name" value="Peptidase_M10"/>
    <property type="match status" value="1"/>
</dbReference>
<dbReference type="PIRSF" id="PIRSF001191">
    <property type="entry name" value="Peptidase_M10A_matrix"/>
    <property type="match status" value="1"/>
</dbReference>
<dbReference type="PRINTS" id="PR00138">
    <property type="entry name" value="MATRIXIN"/>
</dbReference>
<dbReference type="SMART" id="SM00120">
    <property type="entry name" value="HX"/>
    <property type="match status" value="4"/>
</dbReference>
<dbReference type="SMART" id="SM00235">
    <property type="entry name" value="ZnMc"/>
    <property type="match status" value="1"/>
</dbReference>
<dbReference type="SUPFAM" id="SSF50923">
    <property type="entry name" value="Hemopexin-like domain"/>
    <property type="match status" value="1"/>
</dbReference>
<dbReference type="SUPFAM" id="SSF55486">
    <property type="entry name" value="Metalloproteases ('zincins'), catalytic domain"/>
    <property type="match status" value="1"/>
</dbReference>
<dbReference type="PROSITE" id="PS00024">
    <property type="entry name" value="HEMOPEXIN"/>
    <property type="match status" value="1"/>
</dbReference>
<dbReference type="PROSITE" id="PS51642">
    <property type="entry name" value="HEMOPEXIN_2"/>
    <property type="match status" value="4"/>
</dbReference>
<dbReference type="PROSITE" id="PS00142">
    <property type="entry name" value="ZINC_PROTEASE"/>
    <property type="match status" value="1"/>
</dbReference>
<accession>Q499S5</accession>
<accession>P97568</accession>
<gene>
    <name type="primary">Mmp11</name>
</gene>
<feature type="signal peptide" evidence="2">
    <location>
        <begin position="1"/>
        <end position="35"/>
    </location>
</feature>
<feature type="propeptide" id="PRO_0000042649" description="Activation peptide" evidence="1">
    <location>
        <begin position="36"/>
        <end position="101"/>
    </location>
</feature>
<feature type="chain" id="PRO_0000042650" description="Stromelysin-3">
    <location>
        <begin position="102"/>
        <end position="491"/>
    </location>
</feature>
<feature type="repeat" description="Hemopexin 1">
    <location>
        <begin position="298"/>
        <end position="342"/>
    </location>
</feature>
<feature type="repeat" description="Hemopexin 2">
    <location>
        <begin position="343"/>
        <end position="385"/>
    </location>
</feature>
<feature type="repeat" description="Hemopexin 3">
    <location>
        <begin position="387"/>
        <end position="435"/>
    </location>
</feature>
<feature type="repeat" description="Hemopexin 4">
    <location>
        <begin position="436"/>
        <end position="483"/>
    </location>
</feature>
<feature type="region of interest" description="Disordered" evidence="4">
    <location>
        <begin position="260"/>
        <end position="279"/>
    </location>
</feature>
<feature type="short sequence motif" description="Cysteine switch" evidence="1">
    <location>
        <begin position="82"/>
        <end position="89"/>
    </location>
</feature>
<feature type="compositionally biased region" description="Low complexity" evidence="4">
    <location>
        <begin position="263"/>
        <end position="277"/>
    </location>
</feature>
<feature type="active site" evidence="3">
    <location>
        <position position="219"/>
    </location>
</feature>
<feature type="binding site" description="in inhibited form" evidence="1">
    <location>
        <position position="84"/>
    </location>
    <ligand>
        <name>Zn(2+)</name>
        <dbReference type="ChEBI" id="CHEBI:29105"/>
        <label>2</label>
        <note>catalytic</note>
    </ligand>
</feature>
<feature type="binding site" evidence="1">
    <location>
        <position position="168"/>
    </location>
    <ligand>
        <name>Zn(2+)</name>
        <dbReference type="ChEBI" id="CHEBI:29105"/>
        <label>1</label>
    </ligand>
</feature>
<feature type="binding site" evidence="1">
    <location>
        <position position="170"/>
    </location>
    <ligand>
        <name>Zn(2+)</name>
        <dbReference type="ChEBI" id="CHEBI:29105"/>
        <label>1</label>
    </ligand>
</feature>
<feature type="binding site" evidence="1">
    <location>
        <position position="175"/>
    </location>
    <ligand>
        <name>Ca(2+)</name>
        <dbReference type="ChEBI" id="CHEBI:29108"/>
    </ligand>
</feature>
<feature type="binding site" evidence="1">
    <location>
        <position position="176"/>
    </location>
    <ligand>
        <name>Ca(2+)</name>
        <dbReference type="ChEBI" id="CHEBI:29108"/>
    </ligand>
</feature>
<feature type="binding site" evidence="1">
    <location>
        <position position="178"/>
    </location>
    <ligand>
        <name>Ca(2+)</name>
        <dbReference type="ChEBI" id="CHEBI:29108"/>
    </ligand>
</feature>
<feature type="binding site" evidence="1">
    <location>
        <position position="180"/>
    </location>
    <ligand>
        <name>Ca(2+)</name>
        <dbReference type="ChEBI" id="CHEBI:29108"/>
    </ligand>
</feature>
<feature type="binding site" evidence="1">
    <location>
        <position position="183"/>
    </location>
    <ligand>
        <name>Zn(2+)</name>
        <dbReference type="ChEBI" id="CHEBI:29105"/>
        <label>1</label>
    </ligand>
</feature>
<feature type="binding site" evidence="1">
    <location>
        <position position="196"/>
    </location>
    <ligand>
        <name>Zn(2+)</name>
        <dbReference type="ChEBI" id="CHEBI:29105"/>
        <label>1</label>
    </ligand>
</feature>
<feature type="binding site" evidence="1">
    <location>
        <position position="218"/>
    </location>
    <ligand>
        <name>Zn(2+)</name>
        <dbReference type="ChEBI" id="CHEBI:29105"/>
        <label>2</label>
        <note>catalytic</note>
    </ligand>
</feature>
<feature type="binding site" evidence="1">
    <location>
        <position position="222"/>
    </location>
    <ligand>
        <name>Zn(2+)</name>
        <dbReference type="ChEBI" id="CHEBI:29105"/>
        <label>2</label>
        <note>catalytic</note>
    </ligand>
</feature>
<feature type="binding site" evidence="1">
    <location>
        <position position="228"/>
    </location>
    <ligand>
        <name>Zn(2+)</name>
        <dbReference type="ChEBI" id="CHEBI:29105"/>
        <label>2</label>
        <note>catalytic</note>
    </ligand>
</feature>
<feature type="disulfide bond" evidence="1">
    <location>
        <begin position="297"/>
        <end position="483"/>
    </location>
</feature>
<proteinExistence type="evidence at protein level"/>
<comment type="function">
    <text evidence="1">May play an important role in the progression of epithelial malignancies.</text>
</comment>
<comment type="cofactor">
    <cofactor>
        <name>Ca(2+)</name>
        <dbReference type="ChEBI" id="CHEBI:29108"/>
    </cofactor>
    <text>Binds 1 Ca(2+) ion per subunit.</text>
</comment>
<comment type="cofactor">
    <cofactor>
        <name>Zn(2+)</name>
        <dbReference type="ChEBI" id="CHEBI:29105"/>
    </cofactor>
    <text>Binds 2 Zn(2+) ions per subunit.</text>
</comment>
<comment type="subcellular location">
    <subcellularLocation>
        <location evidence="1">Secreted</location>
        <location evidence="1">Extracellular space</location>
        <location evidence="1">Extracellular matrix</location>
    </subcellularLocation>
</comment>
<comment type="tissue specificity">
    <text evidence="5">Highly expressed in ovary and uterus.</text>
</comment>
<comment type="induction">
    <text evidence="5">In skin fibroblasts of superficial dermis upon skin lesion with highest level between days 5-10.</text>
</comment>
<comment type="domain">
    <text>The conserved cysteine present in the cysteine-switch motif binds the catalytic zinc ion, thus inhibiting the enzyme. The dissociation of the cysteine from the zinc ion upon the activation-peptide release activates the enzyme.</text>
</comment>
<comment type="PTM">
    <text evidence="5">The precursor is cleaved by a furin endopeptidase.</text>
</comment>
<comment type="similarity">
    <text evidence="6">Belongs to the peptidase M10A family.</text>
</comment>
<comment type="sequence caution" evidence="6">
    <conflict type="erroneous initiation">
        <sequence resource="EMBL-CDS" id="AAC53061"/>
    </conflict>
</comment>
<comment type="sequence caution" evidence="6">
    <conflict type="erroneous initiation">
        <sequence resource="EMBL-CDS" id="AAH99781"/>
    </conflict>
</comment>
<organism>
    <name type="scientific">Rattus norvegicus</name>
    <name type="common">Rat</name>
    <dbReference type="NCBI Taxonomy" id="10116"/>
    <lineage>
        <taxon>Eukaryota</taxon>
        <taxon>Metazoa</taxon>
        <taxon>Chordata</taxon>
        <taxon>Craniata</taxon>
        <taxon>Vertebrata</taxon>
        <taxon>Euteleostomi</taxon>
        <taxon>Mammalia</taxon>
        <taxon>Eutheria</taxon>
        <taxon>Euarchontoglires</taxon>
        <taxon>Glires</taxon>
        <taxon>Rodentia</taxon>
        <taxon>Myomorpha</taxon>
        <taxon>Muroidea</taxon>
        <taxon>Muridae</taxon>
        <taxon>Murinae</taxon>
        <taxon>Rattus</taxon>
    </lineage>
</organism>
<evidence type="ECO:0000250" key="1"/>
<evidence type="ECO:0000255" key="2"/>
<evidence type="ECO:0000255" key="3">
    <source>
        <dbReference type="PROSITE-ProRule" id="PRU10095"/>
    </source>
</evidence>
<evidence type="ECO:0000256" key="4">
    <source>
        <dbReference type="SAM" id="MobiDB-lite"/>
    </source>
</evidence>
<evidence type="ECO:0000269" key="5">
    <source>
    </source>
</evidence>
<evidence type="ECO:0000305" key="6"/>
<keyword id="KW-0106">Calcium</keyword>
<keyword id="KW-0165">Cleavage on pair of basic residues</keyword>
<keyword id="KW-0177">Collagen degradation</keyword>
<keyword id="KW-1015">Disulfide bond</keyword>
<keyword id="KW-0272">Extracellular matrix</keyword>
<keyword id="KW-0378">Hydrolase</keyword>
<keyword id="KW-0479">Metal-binding</keyword>
<keyword id="KW-0482">Metalloprotease</keyword>
<keyword id="KW-0645">Protease</keyword>
<keyword id="KW-1185">Reference proteome</keyword>
<keyword id="KW-0677">Repeat</keyword>
<keyword id="KW-0964">Secreted</keyword>
<keyword id="KW-0732">Signal</keyword>
<keyword id="KW-0862">Zinc</keyword>
<keyword id="KW-0865">Zymogen</keyword>
<sequence>MARAACLLRAISRALLLPLPLLLLLLLLLPPQLMARARPPENHRHRPVKRVPQLLPAALPNSLPSVPASHWVPGPASSSRPLRCGVPDPPDVLNARNRQKRFVLSGGRWEKTDLTYRILRFPWQLVREQVRQTVAEALRVWSEVTPLTFTEVHEGRADIMIDFTRYWHGDNLPFDGPGGILAHAFFPKTHREGDVHFDYDETWTIGDKGTDLLQVAAHEFGHVLGLQHTTAAKALMSPFYTFRYPLSLSPDDRRGIQHLYGRPQLTPTSPTPTLSSQAGTDTNEIALQEPEVPPEVCETSFDAVSTIRGELFFFKAGFVWRLRSGQLQPGYPALASRHWQGLPSPVDAAFEDAQGQIWFFQGAQYWVYDGEKPVLGPAPLSKLGLQGSPVHAALVWGPEKNKIYFFRGGDYWRFHPRTQRVDNPVPRRTTDWRGVPSEIDAAFQDAEGYAYFLRGHLYWKFDPVKVKVLESFPRPIGPDFFDCAEPANTFR</sequence>